<gene>
    <name evidence="1" type="primary">kup</name>
    <name type="ordered locus">Bcen2424_1799</name>
</gene>
<name>KUP_BURCH</name>
<reference key="1">
    <citation type="submission" date="2006-08" db="EMBL/GenBank/DDBJ databases">
        <title>Complete sequence of chromosome 1 of Burkholderia cenocepacia HI2424.</title>
        <authorList>
            <person name="Copeland A."/>
            <person name="Lucas S."/>
            <person name="Lapidus A."/>
            <person name="Barry K."/>
            <person name="Detter J.C."/>
            <person name="Glavina del Rio T."/>
            <person name="Hammon N."/>
            <person name="Israni S."/>
            <person name="Pitluck S."/>
            <person name="Chain P."/>
            <person name="Malfatti S."/>
            <person name="Shin M."/>
            <person name="Vergez L."/>
            <person name="Schmutz J."/>
            <person name="Larimer F."/>
            <person name="Land M."/>
            <person name="Hauser L."/>
            <person name="Kyrpides N."/>
            <person name="Kim E."/>
            <person name="LiPuma J.J."/>
            <person name="Gonzalez C.F."/>
            <person name="Konstantinidis K."/>
            <person name="Tiedje J.M."/>
            <person name="Richardson P."/>
        </authorList>
    </citation>
    <scope>NUCLEOTIDE SEQUENCE [LARGE SCALE GENOMIC DNA]</scope>
    <source>
        <strain>HI2424</strain>
    </source>
</reference>
<organism>
    <name type="scientific">Burkholderia cenocepacia (strain HI2424)</name>
    <dbReference type="NCBI Taxonomy" id="331272"/>
    <lineage>
        <taxon>Bacteria</taxon>
        <taxon>Pseudomonadati</taxon>
        <taxon>Pseudomonadota</taxon>
        <taxon>Betaproteobacteria</taxon>
        <taxon>Burkholderiales</taxon>
        <taxon>Burkholderiaceae</taxon>
        <taxon>Burkholderia</taxon>
        <taxon>Burkholderia cepacia complex</taxon>
    </lineage>
</organism>
<proteinExistence type="inferred from homology"/>
<evidence type="ECO:0000255" key="1">
    <source>
        <dbReference type="HAMAP-Rule" id="MF_01522"/>
    </source>
</evidence>
<keyword id="KW-0997">Cell inner membrane</keyword>
<keyword id="KW-1003">Cell membrane</keyword>
<keyword id="KW-0406">Ion transport</keyword>
<keyword id="KW-0472">Membrane</keyword>
<keyword id="KW-0630">Potassium</keyword>
<keyword id="KW-0633">Potassium transport</keyword>
<keyword id="KW-0769">Symport</keyword>
<keyword id="KW-0812">Transmembrane</keyword>
<keyword id="KW-1133">Transmembrane helix</keyword>
<keyword id="KW-0813">Transport</keyword>
<protein>
    <recommendedName>
        <fullName evidence="1">Probable potassium transport system protein Kup</fullName>
    </recommendedName>
</protein>
<sequence>MNDTTHATDAAHSPHSTQQHSMRALAIAAIGVVFGDIGTSPLYSLKEAFSPAHGIPLTEGSILGVISLLFWAILLVVGVKYLLFVMRADNNGEGGVLALMALSLRPLDSKTRVAGALMALGIFGACMFYGDAVITPAISVMSAVEGLEIATPHLSHLVLPITIVILIALFWIQRHGTALVGKLFGPIMVLWFVVIAALGVYHIVRVPGIIAAINPYYAASFMADHLLQAYVVLGSVVLVLTGAEALYADMGHFGAKPIRYAAYGLVMPSLVLNYFGQGALLIQNPKAIENPFFLLAPEWGLLPLVVLSTVATVIASQAVISGAYSLTSQAIQLGYVPRMKVLHTSELAIGQIYVPVVNWLLLAVILCIVVGFKSSDNLAAAYGIAVTATMVITTVLACVVMVKVWNWNRLLVGAIIAVFLAIDLGFFGANLLKVAQGGWLPLGIGALLFFLLMTWYKGRHIVKERTAADGIPLEPFLQGLLAHPPHRVSGTAIYLTGNDKLVPVSLLHNLKHNKVLHERTIFLTFVTRDIPYVRDDKRQSARDAGGGLYIVKAEYGFNETPDVKAVLEEFGRTHDMTFELMDTSFFLARETVVPTHLPGMSIWRERVFAWMHQNAAKPTDFFAIPANRVVELGTKIEI</sequence>
<accession>A0K7S3</accession>
<comment type="function">
    <text evidence="1">Transport of potassium into the cell. Likely operates as a K(+):H(+) symporter.</text>
</comment>
<comment type="catalytic activity">
    <reaction evidence="1">
        <text>K(+)(in) + H(+)(in) = K(+)(out) + H(+)(out)</text>
        <dbReference type="Rhea" id="RHEA:28490"/>
        <dbReference type="ChEBI" id="CHEBI:15378"/>
        <dbReference type="ChEBI" id="CHEBI:29103"/>
    </reaction>
    <physiologicalReaction direction="right-to-left" evidence="1">
        <dbReference type="Rhea" id="RHEA:28492"/>
    </physiologicalReaction>
</comment>
<comment type="subcellular location">
    <subcellularLocation>
        <location evidence="1">Cell inner membrane</location>
        <topology evidence="1">Multi-pass membrane protein</topology>
    </subcellularLocation>
</comment>
<comment type="similarity">
    <text evidence="1">Belongs to the HAK/KUP transporter (TC 2.A.72) family.</text>
</comment>
<feature type="chain" id="PRO_0000279770" description="Probable potassium transport system protein Kup">
    <location>
        <begin position="1"/>
        <end position="638"/>
    </location>
</feature>
<feature type="transmembrane region" description="Helical" evidence="1">
    <location>
        <begin position="25"/>
        <end position="45"/>
    </location>
</feature>
<feature type="transmembrane region" description="Helical" evidence="1">
    <location>
        <begin position="65"/>
        <end position="85"/>
    </location>
</feature>
<feature type="transmembrane region" description="Helical" evidence="1">
    <location>
        <begin position="114"/>
        <end position="134"/>
    </location>
</feature>
<feature type="transmembrane region" description="Helical" evidence="1">
    <location>
        <begin position="152"/>
        <end position="172"/>
    </location>
</feature>
<feature type="transmembrane region" description="Helical" evidence="1">
    <location>
        <begin position="184"/>
        <end position="204"/>
    </location>
</feature>
<feature type="transmembrane region" description="Helical" evidence="1">
    <location>
        <begin position="226"/>
        <end position="246"/>
    </location>
</feature>
<feature type="transmembrane region" description="Helical" evidence="1">
    <location>
        <begin position="262"/>
        <end position="282"/>
    </location>
</feature>
<feature type="transmembrane region" description="Helical" evidence="1">
    <location>
        <begin position="291"/>
        <end position="311"/>
    </location>
</feature>
<feature type="transmembrane region" description="Helical" evidence="1">
    <location>
        <begin position="352"/>
        <end position="372"/>
    </location>
</feature>
<feature type="transmembrane region" description="Helical" evidence="1">
    <location>
        <begin position="382"/>
        <end position="402"/>
    </location>
</feature>
<feature type="transmembrane region" description="Helical" evidence="1">
    <location>
        <begin position="410"/>
        <end position="430"/>
    </location>
</feature>
<feature type="transmembrane region" description="Helical" evidence="1">
    <location>
        <begin position="434"/>
        <end position="454"/>
    </location>
</feature>
<dbReference type="EMBL" id="CP000458">
    <property type="protein sequence ID" value="ABK08550.1"/>
    <property type="molecule type" value="Genomic_DNA"/>
</dbReference>
<dbReference type="RefSeq" id="WP_006478689.1">
    <property type="nucleotide sequence ID" value="NC_008542.1"/>
</dbReference>
<dbReference type="KEGG" id="bch:Bcen2424_1799"/>
<dbReference type="HOGENOM" id="CLU_008142_4_2_4"/>
<dbReference type="GO" id="GO:0005886">
    <property type="term" value="C:plasma membrane"/>
    <property type="evidence" value="ECO:0007669"/>
    <property type="project" value="UniProtKB-SubCell"/>
</dbReference>
<dbReference type="GO" id="GO:0015079">
    <property type="term" value="F:potassium ion transmembrane transporter activity"/>
    <property type="evidence" value="ECO:0007669"/>
    <property type="project" value="UniProtKB-UniRule"/>
</dbReference>
<dbReference type="GO" id="GO:0015293">
    <property type="term" value="F:symporter activity"/>
    <property type="evidence" value="ECO:0007669"/>
    <property type="project" value="UniProtKB-UniRule"/>
</dbReference>
<dbReference type="HAMAP" id="MF_01522">
    <property type="entry name" value="Kup"/>
    <property type="match status" value="1"/>
</dbReference>
<dbReference type="InterPro" id="IPR003855">
    <property type="entry name" value="K+_transporter"/>
</dbReference>
<dbReference type="InterPro" id="IPR053952">
    <property type="entry name" value="K_trans_C"/>
</dbReference>
<dbReference type="InterPro" id="IPR053951">
    <property type="entry name" value="K_trans_N"/>
</dbReference>
<dbReference type="InterPro" id="IPR023051">
    <property type="entry name" value="Kup"/>
</dbReference>
<dbReference type="PANTHER" id="PTHR30540:SF79">
    <property type="entry name" value="LOW AFFINITY POTASSIUM TRANSPORT SYSTEM PROTEIN KUP"/>
    <property type="match status" value="1"/>
</dbReference>
<dbReference type="PANTHER" id="PTHR30540">
    <property type="entry name" value="OSMOTIC STRESS POTASSIUM TRANSPORTER"/>
    <property type="match status" value="1"/>
</dbReference>
<dbReference type="Pfam" id="PF02705">
    <property type="entry name" value="K_trans"/>
    <property type="match status" value="1"/>
</dbReference>
<dbReference type="Pfam" id="PF22776">
    <property type="entry name" value="K_trans_C"/>
    <property type="match status" value="1"/>
</dbReference>